<feature type="chain" id="PRO_0000224275" description="Adenylosuccinate synthetase">
    <location>
        <begin position="1"/>
        <end position="427"/>
    </location>
</feature>
<feature type="active site" description="Proton acceptor" evidence="1">
    <location>
        <position position="13"/>
    </location>
</feature>
<feature type="active site" description="Proton donor" evidence="1">
    <location>
        <position position="41"/>
    </location>
</feature>
<feature type="binding site" evidence="1">
    <location>
        <begin position="12"/>
        <end position="18"/>
    </location>
    <ligand>
        <name>GTP</name>
        <dbReference type="ChEBI" id="CHEBI:37565"/>
    </ligand>
</feature>
<feature type="binding site" description="in other chain" evidence="1">
    <location>
        <begin position="13"/>
        <end position="16"/>
    </location>
    <ligand>
        <name>IMP</name>
        <dbReference type="ChEBI" id="CHEBI:58053"/>
        <note>ligand shared between dimeric partners</note>
    </ligand>
</feature>
<feature type="binding site" evidence="1">
    <location>
        <position position="13"/>
    </location>
    <ligand>
        <name>Mg(2+)</name>
        <dbReference type="ChEBI" id="CHEBI:18420"/>
    </ligand>
</feature>
<feature type="binding site" description="in other chain" evidence="1">
    <location>
        <begin position="38"/>
        <end position="41"/>
    </location>
    <ligand>
        <name>IMP</name>
        <dbReference type="ChEBI" id="CHEBI:58053"/>
        <note>ligand shared between dimeric partners</note>
    </ligand>
</feature>
<feature type="binding site" evidence="1">
    <location>
        <begin position="40"/>
        <end position="42"/>
    </location>
    <ligand>
        <name>GTP</name>
        <dbReference type="ChEBI" id="CHEBI:37565"/>
    </ligand>
</feature>
<feature type="binding site" evidence="1">
    <location>
        <position position="40"/>
    </location>
    <ligand>
        <name>Mg(2+)</name>
        <dbReference type="ChEBI" id="CHEBI:18420"/>
    </ligand>
</feature>
<feature type="binding site" description="in other chain" evidence="1">
    <location>
        <position position="131"/>
    </location>
    <ligand>
        <name>IMP</name>
        <dbReference type="ChEBI" id="CHEBI:58053"/>
        <note>ligand shared between dimeric partners</note>
    </ligand>
</feature>
<feature type="binding site" evidence="1">
    <location>
        <position position="145"/>
    </location>
    <ligand>
        <name>IMP</name>
        <dbReference type="ChEBI" id="CHEBI:58053"/>
        <note>ligand shared between dimeric partners</note>
    </ligand>
</feature>
<feature type="binding site" description="in other chain" evidence="1">
    <location>
        <position position="226"/>
    </location>
    <ligand>
        <name>IMP</name>
        <dbReference type="ChEBI" id="CHEBI:58053"/>
        <note>ligand shared between dimeric partners</note>
    </ligand>
</feature>
<feature type="binding site" description="in other chain" evidence="1">
    <location>
        <position position="241"/>
    </location>
    <ligand>
        <name>IMP</name>
        <dbReference type="ChEBI" id="CHEBI:58053"/>
        <note>ligand shared between dimeric partners</note>
    </ligand>
</feature>
<feature type="binding site" evidence="1">
    <location>
        <begin position="301"/>
        <end position="307"/>
    </location>
    <ligand>
        <name>substrate</name>
    </ligand>
</feature>
<feature type="binding site" description="in other chain" evidence="1">
    <location>
        <position position="305"/>
    </location>
    <ligand>
        <name>IMP</name>
        <dbReference type="ChEBI" id="CHEBI:58053"/>
        <note>ligand shared between dimeric partners</note>
    </ligand>
</feature>
<feature type="binding site" evidence="1">
    <location>
        <position position="307"/>
    </location>
    <ligand>
        <name>GTP</name>
        <dbReference type="ChEBI" id="CHEBI:37565"/>
    </ligand>
</feature>
<feature type="binding site" evidence="1">
    <location>
        <begin position="333"/>
        <end position="335"/>
    </location>
    <ligand>
        <name>GTP</name>
        <dbReference type="ChEBI" id="CHEBI:37565"/>
    </ligand>
</feature>
<feature type="binding site" evidence="1">
    <location>
        <begin position="415"/>
        <end position="417"/>
    </location>
    <ligand>
        <name>GTP</name>
        <dbReference type="ChEBI" id="CHEBI:37565"/>
    </ligand>
</feature>
<comment type="function">
    <text evidence="1">Plays an important role in the de novo pathway of purine nucleotide biosynthesis. Catalyzes the first committed step in the biosynthesis of AMP from IMP.</text>
</comment>
<comment type="catalytic activity">
    <reaction evidence="1">
        <text>IMP + L-aspartate + GTP = N(6)-(1,2-dicarboxyethyl)-AMP + GDP + phosphate + 2 H(+)</text>
        <dbReference type="Rhea" id="RHEA:15753"/>
        <dbReference type="ChEBI" id="CHEBI:15378"/>
        <dbReference type="ChEBI" id="CHEBI:29991"/>
        <dbReference type="ChEBI" id="CHEBI:37565"/>
        <dbReference type="ChEBI" id="CHEBI:43474"/>
        <dbReference type="ChEBI" id="CHEBI:57567"/>
        <dbReference type="ChEBI" id="CHEBI:58053"/>
        <dbReference type="ChEBI" id="CHEBI:58189"/>
        <dbReference type="EC" id="6.3.4.4"/>
    </reaction>
</comment>
<comment type="cofactor">
    <cofactor evidence="1">
        <name>Mg(2+)</name>
        <dbReference type="ChEBI" id="CHEBI:18420"/>
    </cofactor>
    <text evidence="1">Binds 1 Mg(2+) ion per subunit.</text>
</comment>
<comment type="pathway">
    <text evidence="1">Purine metabolism; AMP biosynthesis via de novo pathway; AMP from IMP: step 1/2.</text>
</comment>
<comment type="subunit">
    <text evidence="1">Homodimer.</text>
</comment>
<comment type="subcellular location">
    <subcellularLocation>
        <location evidence="1">Cytoplasm</location>
    </subcellularLocation>
</comment>
<comment type="similarity">
    <text evidence="1">Belongs to the adenylosuccinate synthetase family.</text>
</comment>
<reference key="1">
    <citation type="journal article" date="2011" name="J. Bacteriol.">
        <title>Complete genome sequence and updated annotation of Desulfovibrio alaskensis G20.</title>
        <authorList>
            <person name="Hauser L.J."/>
            <person name="Land M.L."/>
            <person name="Brown S.D."/>
            <person name="Larimer F."/>
            <person name="Keller K.L."/>
            <person name="Rapp-Giles B.J."/>
            <person name="Price M.N."/>
            <person name="Lin M."/>
            <person name="Bruce D.C."/>
            <person name="Detter J.C."/>
            <person name="Tapia R."/>
            <person name="Han C.S."/>
            <person name="Goodwin L.A."/>
            <person name="Cheng J.F."/>
            <person name="Pitluck S."/>
            <person name="Copeland A."/>
            <person name="Lucas S."/>
            <person name="Nolan M."/>
            <person name="Lapidus A.L."/>
            <person name="Palumbo A.V."/>
            <person name="Wall J.D."/>
        </authorList>
    </citation>
    <scope>NUCLEOTIDE SEQUENCE [LARGE SCALE GENOMIC DNA]</scope>
    <source>
        <strain>ATCC BAA-1058 / DSM 17464 / G20</strain>
    </source>
</reference>
<protein>
    <recommendedName>
        <fullName evidence="1">Adenylosuccinate synthetase</fullName>
        <shortName evidence="1">AMPSase</shortName>
        <shortName evidence="1">AdSS</shortName>
        <ecNumber evidence="1">6.3.4.4</ecNumber>
    </recommendedName>
    <alternativeName>
        <fullName evidence="1">IMP--aspartate ligase</fullName>
    </alternativeName>
</protein>
<organism>
    <name type="scientific">Oleidesulfovibrio alaskensis (strain ATCC BAA-1058 / DSM 17464 / G20)</name>
    <name type="common">Desulfovibrio alaskensis</name>
    <dbReference type="NCBI Taxonomy" id="207559"/>
    <lineage>
        <taxon>Bacteria</taxon>
        <taxon>Pseudomonadati</taxon>
        <taxon>Thermodesulfobacteriota</taxon>
        <taxon>Desulfovibrionia</taxon>
        <taxon>Desulfovibrionales</taxon>
        <taxon>Desulfovibrionaceae</taxon>
        <taxon>Oleidesulfovibrio</taxon>
    </lineage>
</organism>
<evidence type="ECO:0000255" key="1">
    <source>
        <dbReference type="HAMAP-Rule" id="MF_00011"/>
    </source>
</evidence>
<gene>
    <name evidence="1" type="primary">purA</name>
    <name type="ordered locus">Dde_0176</name>
</gene>
<name>PURA_OLEA2</name>
<sequence>MSNVVIMGAQWGDEGKGKIVDLLSREIDVIVRFQGGNNAGHTVIVGDKSYILHLIPSGILHEGKTCLIGNGVVLDPVVFWKEVEALAERGIDVGPQRLMISRKAHVIMPYHKALDVAREDFKNKESRIGTTGRGIGPCYEDKMSRIGVRAGDLADPALLRSKIEAALVEKNALFTALYGREAMSVDAVFDEVMAVGGRLVPYLTDVSSVIEDAWANDSGVMFEGAQGTHLDIDHGTYPFVTSSNTVAGNAAAGSGIPASRLDRVVAIVKAYTTRVGAGPFPTELDDEAGNHMQSVGHEFGATTGRKRRCGWLDCALLRESVRLNGPTDIALTKLDVMSGLKELKICVAYEYNGQRLQHPPQEQNGLAHVTPVYETMPGWDDDITAAKTWEDLPEAARNYICRIEELLGVPVSMISVGPERDQTLNRK</sequence>
<keyword id="KW-0963">Cytoplasm</keyword>
<keyword id="KW-0342">GTP-binding</keyword>
<keyword id="KW-0436">Ligase</keyword>
<keyword id="KW-0460">Magnesium</keyword>
<keyword id="KW-0479">Metal-binding</keyword>
<keyword id="KW-0547">Nucleotide-binding</keyword>
<keyword id="KW-0658">Purine biosynthesis</keyword>
<keyword id="KW-1185">Reference proteome</keyword>
<proteinExistence type="inferred from homology"/>
<accession>Q317B9</accession>
<dbReference type="EC" id="6.3.4.4" evidence="1"/>
<dbReference type="EMBL" id="CP000112">
    <property type="protein sequence ID" value="ABB36977.1"/>
    <property type="molecule type" value="Genomic_DNA"/>
</dbReference>
<dbReference type="RefSeq" id="WP_011366337.1">
    <property type="nucleotide sequence ID" value="NC_007519.1"/>
</dbReference>
<dbReference type="SMR" id="Q317B9"/>
<dbReference type="STRING" id="207559.Dde_0176"/>
<dbReference type="KEGG" id="dde:Dde_0176"/>
<dbReference type="eggNOG" id="COG0104">
    <property type="taxonomic scope" value="Bacteria"/>
</dbReference>
<dbReference type="HOGENOM" id="CLU_029848_0_0_7"/>
<dbReference type="UniPathway" id="UPA00075">
    <property type="reaction ID" value="UER00335"/>
</dbReference>
<dbReference type="Proteomes" id="UP000002710">
    <property type="component" value="Chromosome"/>
</dbReference>
<dbReference type="GO" id="GO:0005737">
    <property type="term" value="C:cytoplasm"/>
    <property type="evidence" value="ECO:0007669"/>
    <property type="project" value="UniProtKB-SubCell"/>
</dbReference>
<dbReference type="GO" id="GO:0004019">
    <property type="term" value="F:adenylosuccinate synthase activity"/>
    <property type="evidence" value="ECO:0007669"/>
    <property type="project" value="UniProtKB-UniRule"/>
</dbReference>
<dbReference type="GO" id="GO:0005525">
    <property type="term" value="F:GTP binding"/>
    <property type="evidence" value="ECO:0007669"/>
    <property type="project" value="UniProtKB-UniRule"/>
</dbReference>
<dbReference type="GO" id="GO:0000287">
    <property type="term" value="F:magnesium ion binding"/>
    <property type="evidence" value="ECO:0007669"/>
    <property type="project" value="UniProtKB-UniRule"/>
</dbReference>
<dbReference type="GO" id="GO:0044208">
    <property type="term" value="P:'de novo' AMP biosynthetic process"/>
    <property type="evidence" value="ECO:0007669"/>
    <property type="project" value="UniProtKB-UniRule"/>
</dbReference>
<dbReference type="GO" id="GO:0046040">
    <property type="term" value="P:IMP metabolic process"/>
    <property type="evidence" value="ECO:0007669"/>
    <property type="project" value="TreeGrafter"/>
</dbReference>
<dbReference type="CDD" id="cd03108">
    <property type="entry name" value="AdSS"/>
    <property type="match status" value="1"/>
</dbReference>
<dbReference type="FunFam" id="1.10.300.10:FF:000001">
    <property type="entry name" value="Adenylosuccinate synthetase"/>
    <property type="match status" value="1"/>
</dbReference>
<dbReference type="FunFam" id="3.90.170.10:FF:000001">
    <property type="entry name" value="Adenylosuccinate synthetase"/>
    <property type="match status" value="1"/>
</dbReference>
<dbReference type="Gene3D" id="3.40.440.10">
    <property type="entry name" value="Adenylosuccinate Synthetase, subunit A, domain 1"/>
    <property type="match status" value="1"/>
</dbReference>
<dbReference type="Gene3D" id="1.10.300.10">
    <property type="entry name" value="Adenylosuccinate Synthetase, subunit A, domain 2"/>
    <property type="match status" value="1"/>
</dbReference>
<dbReference type="Gene3D" id="3.90.170.10">
    <property type="entry name" value="Adenylosuccinate Synthetase, subunit A, domain 3"/>
    <property type="match status" value="1"/>
</dbReference>
<dbReference type="HAMAP" id="MF_00011">
    <property type="entry name" value="Adenylosucc_synth"/>
    <property type="match status" value="1"/>
</dbReference>
<dbReference type="InterPro" id="IPR018220">
    <property type="entry name" value="Adenylosuccin_syn_GTP-bd"/>
</dbReference>
<dbReference type="InterPro" id="IPR033128">
    <property type="entry name" value="Adenylosuccin_syn_Lys_AS"/>
</dbReference>
<dbReference type="InterPro" id="IPR042109">
    <property type="entry name" value="Adenylosuccinate_synth_dom1"/>
</dbReference>
<dbReference type="InterPro" id="IPR042110">
    <property type="entry name" value="Adenylosuccinate_synth_dom2"/>
</dbReference>
<dbReference type="InterPro" id="IPR042111">
    <property type="entry name" value="Adenylosuccinate_synth_dom3"/>
</dbReference>
<dbReference type="InterPro" id="IPR001114">
    <property type="entry name" value="Adenylosuccinate_synthetase"/>
</dbReference>
<dbReference type="InterPro" id="IPR027417">
    <property type="entry name" value="P-loop_NTPase"/>
</dbReference>
<dbReference type="NCBIfam" id="NF002223">
    <property type="entry name" value="PRK01117.1"/>
    <property type="match status" value="1"/>
</dbReference>
<dbReference type="NCBIfam" id="TIGR00184">
    <property type="entry name" value="purA"/>
    <property type="match status" value="1"/>
</dbReference>
<dbReference type="PANTHER" id="PTHR11846">
    <property type="entry name" value="ADENYLOSUCCINATE SYNTHETASE"/>
    <property type="match status" value="1"/>
</dbReference>
<dbReference type="PANTHER" id="PTHR11846:SF0">
    <property type="entry name" value="ADENYLOSUCCINATE SYNTHETASE"/>
    <property type="match status" value="1"/>
</dbReference>
<dbReference type="Pfam" id="PF00709">
    <property type="entry name" value="Adenylsucc_synt"/>
    <property type="match status" value="1"/>
</dbReference>
<dbReference type="SMART" id="SM00788">
    <property type="entry name" value="Adenylsucc_synt"/>
    <property type="match status" value="1"/>
</dbReference>
<dbReference type="SUPFAM" id="SSF52540">
    <property type="entry name" value="P-loop containing nucleoside triphosphate hydrolases"/>
    <property type="match status" value="1"/>
</dbReference>
<dbReference type="PROSITE" id="PS01266">
    <property type="entry name" value="ADENYLOSUCCIN_SYN_1"/>
    <property type="match status" value="1"/>
</dbReference>
<dbReference type="PROSITE" id="PS00513">
    <property type="entry name" value="ADENYLOSUCCIN_SYN_2"/>
    <property type="match status" value="1"/>
</dbReference>